<gene>
    <name type="primary">mrps-9</name>
    <name type="ORF">F09G8.3</name>
</gene>
<accession>P34388</accession>
<accession>Q8MNT6</accession>
<keyword id="KW-0496">Mitochondrion</keyword>
<keyword id="KW-1185">Reference proteome</keyword>
<keyword id="KW-0687">Ribonucleoprotein</keyword>
<keyword id="KW-0689">Ribosomal protein</keyword>
<keyword id="KW-0809">Transit peptide</keyword>
<proteinExistence type="inferred from homology"/>
<protein>
    <recommendedName>
        <fullName evidence="4">Small ribosomal subunit protein uS9m</fullName>
    </recommendedName>
    <alternativeName>
        <fullName evidence="4">40S ribosomal protein S9, mitochondrial</fullName>
        <shortName>MRP-S9</shortName>
        <shortName>S9mt</shortName>
    </alternativeName>
</protein>
<reference key="1">
    <citation type="journal article" date="1994" name="Nature">
        <title>2.2 Mb of contiguous nucleotide sequence from chromosome III of C. elegans.</title>
        <authorList>
            <person name="Wilson R."/>
            <person name="Ainscough R."/>
            <person name="Anderson K."/>
            <person name="Baynes C."/>
            <person name="Berks M."/>
            <person name="Bonfield J."/>
            <person name="Burton J."/>
            <person name="Connell M."/>
            <person name="Copsey T."/>
            <person name="Cooper J."/>
            <person name="Coulson A."/>
            <person name="Craxton M."/>
            <person name="Dear S."/>
            <person name="Du Z."/>
            <person name="Durbin R."/>
            <person name="Favello A."/>
            <person name="Fraser A."/>
            <person name="Fulton L."/>
            <person name="Gardner A."/>
            <person name="Green P."/>
            <person name="Hawkins T."/>
            <person name="Hillier L."/>
            <person name="Jier M."/>
            <person name="Johnston L."/>
            <person name="Jones M."/>
            <person name="Kershaw J."/>
            <person name="Kirsten J."/>
            <person name="Laisster N."/>
            <person name="Latreille P."/>
            <person name="Lightning J."/>
            <person name="Lloyd C."/>
            <person name="Mortimore B."/>
            <person name="O'Callaghan M."/>
            <person name="Parsons J."/>
            <person name="Percy C."/>
            <person name="Rifken L."/>
            <person name="Roopra A."/>
            <person name="Saunders D."/>
            <person name="Shownkeen R."/>
            <person name="Sims M."/>
            <person name="Smaldon N."/>
            <person name="Smith A."/>
            <person name="Smith M."/>
            <person name="Sonnhammer E."/>
            <person name="Staden R."/>
            <person name="Sulston J."/>
            <person name="Thierry-Mieg J."/>
            <person name="Thomas K."/>
            <person name="Vaudin M."/>
            <person name="Vaughan K."/>
            <person name="Waterston R."/>
            <person name="Watson A."/>
            <person name="Weinstock L."/>
            <person name="Wilkinson-Sproat J."/>
            <person name="Wohldman P."/>
        </authorList>
    </citation>
    <scope>NUCLEOTIDE SEQUENCE [LARGE SCALE GENOMIC DNA]</scope>
    <source>
        <strain>Bristol N2</strain>
    </source>
</reference>
<reference key="2">
    <citation type="journal article" date="1998" name="Science">
        <title>Genome sequence of the nematode C. elegans: a platform for investigating biology.</title>
        <authorList>
            <consortium name="The C. elegans sequencing consortium"/>
        </authorList>
    </citation>
    <scope>NUCLEOTIDE SEQUENCE [LARGE SCALE GENOMIC DNA]</scope>
    <source>
        <strain>Bristol N2</strain>
    </source>
</reference>
<dbReference type="EMBL" id="FO080289">
    <property type="protein sequence ID" value="CCD62643.1"/>
    <property type="molecule type" value="Genomic_DNA"/>
</dbReference>
<dbReference type="PIR" id="S44795">
    <property type="entry name" value="S44795"/>
</dbReference>
<dbReference type="RefSeq" id="NP_498815.1">
    <property type="nucleotide sequence ID" value="NM_066414.6"/>
</dbReference>
<dbReference type="SMR" id="P34388"/>
<dbReference type="BioGRID" id="49066">
    <property type="interactions" value="5"/>
</dbReference>
<dbReference type="FunCoup" id="P34388">
    <property type="interactions" value="1791"/>
</dbReference>
<dbReference type="STRING" id="6239.F09G8.3.1"/>
<dbReference type="PaxDb" id="6239-F09G8.3"/>
<dbReference type="PeptideAtlas" id="P34388"/>
<dbReference type="EnsemblMetazoa" id="F09G8.3.1">
    <property type="protein sequence ID" value="F09G8.3.1"/>
    <property type="gene ID" value="WBGene00017319"/>
</dbReference>
<dbReference type="GeneID" id="184267"/>
<dbReference type="KEGG" id="cel:CELE_F09G8.3"/>
<dbReference type="UCSC" id="F09G8.3">
    <property type="organism name" value="c. elegans"/>
</dbReference>
<dbReference type="AGR" id="WB:WBGene00017319"/>
<dbReference type="CTD" id="184267"/>
<dbReference type="WormBase" id="F09G8.3">
    <property type="protein sequence ID" value="CE24890"/>
    <property type="gene ID" value="WBGene00017319"/>
    <property type="gene designation" value="mrps-9"/>
</dbReference>
<dbReference type="eggNOG" id="KOG1697">
    <property type="taxonomic scope" value="Eukaryota"/>
</dbReference>
<dbReference type="GeneTree" id="ENSGT00390000011204"/>
<dbReference type="HOGENOM" id="CLU_060546_1_0_1"/>
<dbReference type="InParanoid" id="P34388"/>
<dbReference type="OMA" id="HHFLFYT"/>
<dbReference type="OrthoDB" id="10254627at2759"/>
<dbReference type="PhylomeDB" id="P34388"/>
<dbReference type="Reactome" id="R-CEL-5389840">
    <property type="pathway name" value="Mitochondrial translation elongation"/>
</dbReference>
<dbReference type="Reactome" id="R-CEL-5419276">
    <property type="pathway name" value="Mitochondrial translation termination"/>
</dbReference>
<dbReference type="PRO" id="PR:P34388"/>
<dbReference type="Proteomes" id="UP000001940">
    <property type="component" value="Chromosome III"/>
</dbReference>
<dbReference type="Bgee" id="WBGene00017319">
    <property type="expression patterns" value="Expressed in germ line (C elegans) and 4 other cell types or tissues"/>
</dbReference>
<dbReference type="GO" id="GO:0005763">
    <property type="term" value="C:mitochondrial small ribosomal subunit"/>
    <property type="evidence" value="ECO:0000318"/>
    <property type="project" value="GO_Central"/>
</dbReference>
<dbReference type="GO" id="GO:0003723">
    <property type="term" value="F:RNA binding"/>
    <property type="evidence" value="ECO:0000318"/>
    <property type="project" value="GO_Central"/>
</dbReference>
<dbReference type="GO" id="GO:0003735">
    <property type="term" value="F:structural constituent of ribosome"/>
    <property type="evidence" value="ECO:0000318"/>
    <property type="project" value="GO_Central"/>
</dbReference>
<dbReference type="GO" id="GO:0006412">
    <property type="term" value="P:translation"/>
    <property type="evidence" value="ECO:0007669"/>
    <property type="project" value="InterPro"/>
</dbReference>
<dbReference type="Gene3D" id="3.30.230.10">
    <property type="match status" value="1"/>
</dbReference>
<dbReference type="InterPro" id="IPR020568">
    <property type="entry name" value="Ribosomal_Su5_D2-typ_SF"/>
</dbReference>
<dbReference type="InterPro" id="IPR000754">
    <property type="entry name" value="Ribosomal_uS9"/>
</dbReference>
<dbReference type="InterPro" id="IPR014721">
    <property type="entry name" value="Ribsml_uS5_D2-typ_fold_subgr"/>
</dbReference>
<dbReference type="PANTHER" id="PTHR21569">
    <property type="entry name" value="RIBOSOMAL PROTEIN S9"/>
    <property type="match status" value="1"/>
</dbReference>
<dbReference type="PANTHER" id="PTHR21569:SF1">
    <property type="entry name" value="SMALL RIBOSOMAL SUBUNIT PROTEIN US9M"/>
    <property type="match status" value="1"/>
</dbReference>
<dbReference type="Pfam" id="PF00380">
    <property type="entry name" value="Ribosomal_S9"/>
    <property type="match status" value="1"/>
</dbReference>
<dbReference type="SUPFAM" id="SSF54211">
    <property type="entry name" value="Ribosomal protein S5 domain 2-like"/>
    <property type="match status" value="1"/>
</dbReference>
<comment type="subunit">
    <text evidence="1">Component of the mitochondrial ribosome small subunit (28S) which comprises a 12S rRNA and about 30 distinct proteins.</text>
</comment>
<comment type="subcellular location">
    <subcellularLocation>
        <location evidence="1">Mitochondrion</location>
    </subcellularLocation>
</comment>
<comment type="similarity">
    <text evidence="4">Belongs to the universal ribosomal protein uS9 family.</text>
</comment>
<organism>
    <name type="scientific">Caenorhabditis elegans</name>
    <dbReference type="NCBI Taxonomy" id="6239"/>
    <lineage>
        <taxon>Eukaryota</taxon>
        <taxon>Metazoa</taxon>
        <taxon>Ecdysozoa</taxon>
        <taxon>Nematoda</taxon>
        <taxon>Chromadorea</taxon>
        <taxon>Rhabditida</taxon>
        <taxon>Rhabditina</taxon>
        <taxon>Rhabditomorpha</taxon>
        <taxon>Rhabditoidea</taxon>
        <taxon>Rhabditidae</taxon>
        <taxon>Peloderinae</taxon>
        <taxon>Caenorhabditis</taxon>
    </lineage>
</organism>
<feature type="transit peptide" description="Mitochondrion" evidence="2">
    <location>
        <begin position="1"/>
        <end status="unknown"/>
    </location>
</feature>
<feature type="chain" id="PRO_0000030657" description="Small ribosomal subunit protein uS9m">
    <location>
        <begin status="unknown"/>
        <end position="392"/>
    </location>
</feature>
<feature type="region of interest" description="Disordered" evidence="3">
    <location>
        <begin position="8"/>
        <end position="27"/>
    </location>
</feature>
<feature type="compositionally biased region" description="Low complexity" evidence="3">
    <location>
        <begin position="8"/>
        <end position="25"/>
    </location>
</feature>
<sequence length="392" mass="43693">MLRIVLARSSRAMSSASPASASDSDTSVRKIGKALETYLKHSQQHVAMMEKHRAEFETGRRHLAKMMSLDIHELDQEAIDRAILYLFPSGLTDPNARPVMRPPDEILPKFQRFTFDEEGKPEGSRFFTLSPKIYGLLSDIGVKTHSVMKFYDEHVGSRSVNRSDLEPANLSGSQWVTADKLKKKLSEKFSKELYGQVIIAFEHLASLPGSAIEQKFLMEFREPMTASTGSKLFGPAIPEVHVCAVTNRRYAEVTTRCKDTRATVKVTDAGKGKFDIDGLQLHDFRHLQAREILLAPMIVSQSLGRFDVTATTSCISNTLPEAPNKAPLMRSGGMSALPRAVRHGTALCVAALQPEAIEPLRLSGLLTLDPRKNERSKVNQPGARAKWIWKRR</sequence>
<evidence type="ECO:0000250" key="1">
    <source>
        <dbReference type="UniProtKB" id="P82933"/>
    </source>
</evidence>
<evidence type="ECO:0000255" key="2"/>
<evidence type="ECO:0000256" key="3">
    <source>
        <dbReference type="SAM" id="MobiDB-lite"/>
    </source>
</evidence>
<evidence type="ECO:0000305" key="4"/>
<name>RT09_CAEEL</name>